<feature type="chain" id="PRO_0000242566" description="UDP-N-acetylmuramate--L-alanine ligase">
    <location>
        <begin position="1"/>
        <end position="469"/>
    </location>
</feature>
<feature type="binding site" evidence="1">
    <location>
        <begin position="113"/>
        <end position="119"/>
    </location>
    <ligand>
        <name>ATP</name>
        <dbReference type="ChEBI" id="CHEBI:30616"/>
    </ligand>
</feature>
<accession>Q5F6L9</accession>
<keyword id="KW-0067">ATP-binding</keyword>
<keyword id="KW-0131">Cell cycle</keyword>
<keyword id="KW-0132">Cell division</keyword>
<keyword id="KW-0133">Cell shape</keyword>
<keyword id="KW-0961">Cell wall biogenesis/degradation</keyword>
<keyword id="KW-0963">Cytoplasm</keyword>
<keyword id="KW-0436">Ligase</keyword>
<keyword id="KW-0547">Nucleotide-binding</keyword>
<keyword id="KW-0573">Peptidoglycan synthesis</keyword>
<keyword id="KW-1185">Reference proteome</keyword>
<name>MURC_NEIG1</name>
<organism>
    <name type="scientific">Neisseria gonorrhoeae (strain ATCC 700825 / FA 1090)</name>
    <dbReference type="NCBI Taxonomy" id="242231"/>
    <lineage>
        <taxon>Bacteria</taxon>
        <taxon>Pseudomonadati</taxon>
        <taxon>Pseudomonadota</taxon>
        <taxon>Betaproteobacteria</taxon>
        <taxon>Neisseriales</taxon>
        <taxon>Neisseriaceae</taxon>
        <taxon>Neisseria</taxon>
    </lineage>
</organism>
<sequence>MMKNRVSNIHFVGIGGVGMSGIAEVLHNLGFKVSGSDQARNAATEHLSSLGIQVYPGHTAEHVNGADVVVASTAVKKENPEVVAALERQIPVIPRALMLAELMRFRDGIAIAGTHGKTTTTSLTASILGAAGLDPTFVIGGKLNAAGTNARLGKGEYIVAEADESDASFLHLTPIMSVVTNIDEDHMDTYGHSVEKLHQAFIDFIHRMPFYGKAFLCVDSEHVRAILPKVSKPYATYGLDDTADIYATDIENVGAQMKFTVHVQMKGHEQGSFEVVLNMPGRHNVLNALAAIGVALEVGASVEAIQKGLLGFEGVGRRFQKYGDIKLPNGGTALLVDDYGHHPVEMAATLAAARGAYPEKRLVLAFQPHRYTRTRDLFEDFTKVLNTVDALVLTEVYAAGEEPVAAADSRALARAIRVLGKLEPIYCENVADLPQMLMNVLQDGDVVLNMGAGSINRVPSALLELSKQI</sequence>
<evidence type="ECO:0000255" key="1">
    <source>
        <dbReference type="HAMAP-Rule" id="MF_00046"/>
    </source>
</evidence>
<comment type="function">
    <text evidence="1">Cell wall formation.</text>
</comment>
<comment type="catalytic activity">
    <reaction evidence="1">
        <text>UDP-N-acetyl-alpha-D-muramate + L-alanine + ATP = UDP-N-acetyl-alpha-D-muramoyl-L-alanine + ADP + phosphate + H(+)</text>
        <dbReference type="Rhea" id="RHEA:23372"/>
        <dbReference type="ChEBI" id="CHEBI:15378"/>
        <dbReference type="ChEBI" id="CHEBI:30616"/>
        <dbReference type="ChEBI" id="CHEBI:43474"/>
        <dbReference type="ChEBI" id="CHEBI:57972"/>
        <dbReference type="ChEBI" id="CHEBI:70757"/>
        <dbReference type="ChEBI" id="CHEBI:83898"/>
        <dbReference type="ChEBI" id="CHEBI:456216"/>
        <dbReference type="EC" id="6.3.2.8"/>
    </reaction>
</comment>
<comment type="pathway">
    <text evidence="1">Cell wall biogenesis; peptidoglycan biosynthesis.</text>
</comment>
<comment type="subcellular location">
    <subcellularLocation>
        <location evidence="1">Cytoplasm</location>
    </subcellularLocation>
</comment>
<comment type="similarity">
    <text evidence="1">Belongs to the MurCDEF family.</text>
</comment>
<dbReference type="EC" id="6.3.2.8" evidence="1"/>
<dbReference type="EMBL" id="AE004969">
    <property type="protein sequence ID" value="AAW90168.2"/>
    <property type="molecule type" value="Genomic_DNA"/>
</dbReference>
<dbReference type="RefSeq" id="WP_033908872.1">
    <property type="nucleotide sequence ID" value="NC_002946.2"/>
</dbReference>
<dbReference type="SMR" id="Q5F6L9"/>
<dbReference type="STRING" id="242231.NGO_1532"/>
<dbReference type="GeneID" id="66753738"/>
<dbReference type="KEGG" id="ngo:NGO_1532"/>
<dbReference type="PATRIC" id="fig|242231.10.peg.1828"/>
<dbReference type="HOGENOM" id="CLU_028104_2_2_4"/>
<dbReference type="UniPathway" id="UPA00219"/>
<dbReference type="Proteomes" id="UP000000535">
    <property type="component" value="Chromosome"/>
</dbReference>
<dbReference type="GO" id="GO:0005737">
    <property type="term" value="C:cytoplasm"/>
    <property type="evidence" value="ECO:0007669"/>
    <property type="project" value="UniProtKB-SubCell"/>
</dbReference>
<dbReference type="GO" id="GO:0005524">
    <property type="term" value="F:ATP binding"/>
    <property type="evidence" value="ECO:0007669"/>
    <property type="project" value="UniProtKB-UniRule"/>
</dbReference>
<dbReference type="GO" id="GO:0008763">
    <property type="term" value="F:UDP-N-acetylmuramate-L-alanine ligase activity"/>
    <property type="evidence" value="ECO:0007669"/>
    <property type="project" value="UniProtKB-UniRule"/>
</dbReference>
<dbReference type="GO" id="GO:0051301">
    <property type="term" value="P:cell division"/>
    <property type="evidence" value="ECO:0007669"/>
    <property type="project" value="UniProtKB-KW"/>
</dbReference>
<dbReference type="GO" id="GO:0071555">
    <property type="term" value="P:cell wall organization"/>
    <property type="evidence" value="ECO:0007669"/>
    <property type="project" value="UniProtKB-KW"/>
</dbReference>
<dbReference type="GO" id="GO:0009252">
    <property type="term" value="P:peptidoglycan biosynthetic process"/>
    <property type="evidence" value="ECO:0007669"/>
    <property type="project" value="UniProtKB-UniRule"/>
</dbReference>
<dbReference type="GO" id="GO:0008360">
    <property type="term" value="P:regulation of cell shape"/>
    <property type="evidence" value="ECO:0007669"/>
    <property type="project" value="UniProtKB-KW"/>
</dbReference>
<dbReference type="FunFam" id="3.40.1190.10:FF:000001">
    <property type="entry name" value="UDP-N-acetylmuramate--L-alanine ligase"/>
    <property type="match status" value="1"/>
</dbReference>
<dbReference type="Gene3D" id="3.90.190.20">
    <property type="entry name" value="Mur ligase, C-terminal domain"/>
    <property type="match status" value="1"/>
</dbReference>
<dbReference type="Gene3D" id="3.40.1190.10">
    <property type="entry name" value="Mur-like, catalytic domain"/>
    <property type="match status" value="1"/>
</dbReference>
<dbReference type="Gene3D" id="3.40.50.720">
    <property type="entry name" value="NAD(P)-binding Rossmann-like Domain"/>
    <property type="match status" value="1"/>
</dbReference>
<dbReference type="HAMAP" id="MF_00046">
    <property type="entry name" value="MurC"/>
    <property type="match status" value="1"/>
</dbReference>
<dbReference type="InterPro" id="IPR036565">
    <property type="entry name" value="Mur-like_cat_sf"/>
</dbReference>
<dbReference type="InterPro" id="IPR004101">
    <property type="entry name" value="Mur_ligase_C"/>
</dbReference>
<dbReference type="InterPro" id="IPR036615">
    <property type="entry name" value="Mur_ligase_C_dom_sf"/>
</dbReference>
<dbReference type="InterPro" id="IPR013221">
    <property type="entry name" value="Mur_ligase_cen"/>
</dbReference>
<dbReference type="InterPro" id="IPR000713">
    <property type="entry name" value="Mur_ligase_N"/>
</dbReference>
<dbReference type="InterPro" id="IPR050061">
    <property type="entry name" value="MurCDEF_pg_biosynth"/>
</dbReference>
<dbReference type="InterPro" id="IPR005758">
    <property type="entry name" value="UDP-N-AcMur_Ala_ligase_MurC"/>
</dbReference>
<dbReference type="NCBIfam" id="TIGR01082">
    <property type="entry name" value="murC"/>
    <property type="match status" value="1"/>
</dbReference>
<dbReference type="PANTHER" id="PTHR43445:SF3">
    <property type="entry name" value="UDP-N-ACETYLMURAMATE--L-ALANINE LIGASE"/>
    <property type="match status" value="1"/>
</dbReference>
<dbReference type="PANTHER" id="PTHR43445">
    <property type="entry name" value="UDP-N-ACETYLMURAMATE--L-ALANINE LIGASE-RELATED"/>
    <property type="match status" value="1"/>
</dbReference>
<dbReference type="Pfam" id="PF01225">
    <property type="entry name" value="Mur_ligase"/>
    <property type="match status" value="1"/>
</dbReference>
<dbReference type="Pfam" id="PF02875">
    <property type="entry name" value="Mur_ligase_C"/>
    <property type="match status" value="1"/>
</dbReference>
<dbReference type="Pfam" id="PF08245">
    <property type="entry name" value="Mur_ligase_M"/>
    <property type="match status" value="1"/>
</dbReference>
<dbReference type="SUPFAM" id="SSF51984">
    <property type="entry name" value="MurCD N-terminal domain"/>
    <property type="match status" value="1"/>
</dbReference>
<dbReference type="SUPFAM" id="SSF53623">
    <property type="entry name" value="MurD-like peptide ligases, catalytic domain"/>
    <property type="match status" value="1"/>
</dbReference>
<dbReference type="SUPFAM" id="SSF53244">
    <property type="entry name" value="MurD-like peptide ligases, peptide-binding domain"/>
    <property type="match status" value="1"/>
</dbReference>
<proteinExistence type="inferred from homology"/>
<protein>
    <recommendedName>
        <fullName evidence="1">UDP-N-acetylmuramate--L-alanine ligase</fullName>
        <ecNumber evidence="1">6.3.2.8</ecNumber>
    </recommendedName>
    <alternativeName>
        <fullName evidence="1">UDP-N-acetylmuramoyl-L-alanine synthetase</fullName>
    </alternativeName>
</protein>
<reference key="1">
    <citation type="submission" date="2003-03" db="EMBL/GenBank/DDBJ databases">
        <title>The complete genome sequence of Neisseria gonorrhoeae.</title>
        <authorList>
            <person name="Lewis L.A."/>
            <person name="Gillaspy A.F."/>
            <person name="McLaughlin R.E."/>
            <person name="Gipson M."/>
            <person name="Ducey T.F."/>
            <person name="Ownbey T."/>
            <person name="Hartman K."/>
            <person name="Nydick C."/>
            <person name="Carson M.B."/>
            <person name="Vaughn J."/>
            <person name="Thomson C."/>
            <person name="Song L."/>
            <person name="Lin S."/>
            <person name="Yuan X."/>
            <person name="Najar F."/>
            <person name="Zhan M."/>
            <person name="Ren Q."/>
            <person name="Zhu H."/>
            <person name="Qi S."/>
            <person name="Kenton S.M."/>
            <person name="Lai H."/>
            <person name="White J.D."/>
            <person name="Clifton S."/>
            <person name="Roe B.A."/>
            <person name="Dyer D.W."/>
        </authorList>
    </citation>
    <scope>NUCLEOTIDE SEQUENCE [LARGE SCALE GENOMIC DNA]</scope>
    <source>
        <strain>ATCC 700825 / FA 1090</strain>
    </source>
</reference>
<gene>
    <name evidence="1" type="primary">murC</name>
    <name type="ordered locus">NGO_1532</name>
</gene>